<feature type="chain" id="PRO_0000186873" description="Uncharacterized protein aq_616">
    <location>
        <begin position="1"/>
        <end position="167"/>
    </location>
</feature>
<accession>O66868</accession>
<gene>
    <name type="ordered locus">aq_616</name>
</gene>
<sequence length="167" mass="19654">MRLKKLPIRRKMPMELAYIEKLFREEVGLDIKEHKDKAEQISETVVEIYEELLRKGIENANYNGRDYVSYYDLPITEDLERYMNRFIQDRGEEVLKAFVDYLAKLEEELLKAEEALPPLDEELHQKKADILGGIMLMFASVAKQINGDRKLYAESIPVTREVLRTMI</sequence>
<name>Y616_AQUAE</name>
<proteinExistence type="predicted"/>
<keyword id="KW-1185">Reference proteome</keyword>
<comment type="similarity">
    <text evidence="1">To A.aeolicus aq_328.</text>
</comment>
<protein>
    <recommendedName>
        <fullName>Uncharacterized protein aq_616</fullName>
    </recommendedName>
</protein>
<organism>
    <name type="scientific">Aquifex aeolicus (strain VF5)</name>
    <dbReference type="NCBI Taxonomy" id="224324"/>
    <lineage>
        <taxon>Bacteria</taxon>
        <taxon>Pseudomonadati</taxon>
        <taxon>Aquificota</taxon>
        <taxon>Aquificia</taxon>
        <taxon>Aquificales</taxon>
        <taxon>Aquificaceae</taxon>
        <taxon>Aquifex</taxon>
    </lineage>
</organism>
<reference key="1">
    <citation type="journal article" date="1998" name="Nature">
        <title>The complete genome of the hyperthermophilic bacterium Aquifex aeolicus.</title>
        <authorList>
            <person name="Deckert G."/>
            <person name="Warren P.V."/>
            <person name="Gaasterland T."/>
            <person name="Young W.G."/>
            <person name="Lenox A.L."/>
            <person name="Graham D.E."/>
            <person name="Overbeek R."/>
            <person name="Snead M.A."/>
            <person name="Keller M."/>
            <person name="Aujay M."/>
            <person name="Huber R."/>
            <person name="Feldman R.A."/>
            <person name="Short J.M."/>
            <person name="Olsen G.J."/>
            <person name="Swanson R.V."/>
        </authorList>
    </citation>
    <scope>NUCLEOTIDE SEQUENCE [LARGE SCALE GENOMIC DNA]</scope>
    <source>
        <strain>VF5</strain>
    </source>
</reference>
<evidence type="ECO:0000305" key="1"/>
<dbReference type="EMBL" id="AE000657">
    <property type="protein sequence ID" value="AAC06831.1"/>
    <property type="molecule type" value="Genomic_DNA"/>
</dbReference>
<dbReference type="PIR" id="H70354">
    <property type="entry name" value="H70354"/>
</dbReference>
<dbReference type="RefSeq" id="NP_213428.1">
    <property type="nucleotide sequence ID" value="NC_000918.1"/>
</dbReference>
<dbReference type="RefSeq" id="WP_010880366.1">
    <property type="nucleotide sequence ID" value="NC_000918.1"/>
</dbReference>
<dbReference type="SMR" id="O66868"/>
<dbReference type="STRING" id="224324.aq_616"/>
<dbReference type="EnsemblBacteria" id="AAC06831">
    <property type="protein sequence ID" value="AAC06831"/>
    <property type="gene ID" value="aq_616"/>
</dbReference>
<dbReference type="KEGG" id="aae:aq_616"/>
<dbReference type="HOGENOM" id="CLU_1591202_0_0_0"/>
<dbReference type="InParanoid" id="O66868"/>
<dbReference type="OrthoDB" id="14134at2"/>
<dbReference type="Proteomes" id="UP000000798">
    <property type="component" value="Chromosome"/>
</dbReference>
<dbReference type="GO" id="GO:0046982">
    <property type="term" value="F:protein heterodimerization activity"/>
    <property type="evidence" value="ECO:0007669"/>
    <property type="project" value="InterPro"/>
</dbReference>
<dbReference type="CDD" id="cd22923">
    <property type="entry name" value="HFD_Aq328-like_rpt2"/>
    <property type="match status" value="1"/>
</dbReference>
<dbReference type="Gene3D" id="1.10.20.10">
    <property type="entry name" value="Histone, subunit A"/>
    <property type="match status" value="1"/>
</dbReference>
<dbReference type="InterPro" id="IPR015207">
    <property type="entry name" value="DUF1931"/>
</dbReference>
<dbReference type="InterPro" id="IPR009072">
    <property type="entry name" value="Histone-fold"/>
</dbReference>
<dbReference type="Pfam" id="PF09123">
    <property type="entry name" value="DUF1931"/>
    <property type="match status" value="1"/>
</dbReference>
<dbReference type="SUPFAM" id="SSF47113">
    <property type="entry name" value="Histone-fold"/>
    <property type="match status" value="1"/>
</dbReference>